<comment type="function">
    <text evidence="6 7 8 10">Mediates the electrogenic exchange of Ca(2+) against Na(+) ions across the cell membrane, and thereby contributes to the regulation of cytoplasmic Ca(2+) levels and Ca(2+)-dependent cellular processes. Contributes to cellular Ca(2+) homeostasis in excitable cells, both in muscle and in brain (PubMed:14722618, PubMed:21593315). In a first phase, voltage-gated channels mediate the rapid increase of cytoplasmic Ca(2+) levels due to release of Ca(2+) stores from the endoplasmic reticulum. SLC8A3 mediates the export of Ca(2+) from the cell during the next phase, so that cytoplasmic Ca(2+) levels rapidly return to baseline (PubMed:14722618, PubMed:21593315). Contributes to Ca(2+) transport during excitation-contraction coupling in muscle (PubMed:14722618). In neurons, contributes to the rapid decrease of cytoplasmic Ca(2+) levels back to baseline after neuronal activation, and thereby contributes to modulate synaptic plasticity, learning and memory (PubMed:21593315). Required for normal oligodendrocyte differentiation and for normal myelination (PubMed:21959935). Mediates Ca(2+) efflux from mitochondria and contributes to mitochondrial Ca(2+) ion homeostasis (PubMed:24616101). Isoform 1 displays higher calcium exchanger activity than isoform 2, probably because isoform 1 has a lower threshold for activation by cytoplasmic Ca(2+) (PubMed:24616101).</text>
</comment>
<comment type="catalytic activity">
    <reaction evidence="14 15">
        <text>Ca(2+)(in) + 3 Na(+)(out) = Ca(2+)(out) + 3 Na(+)(in)</text>
        <dbReference type="Rhea" id="RHEA:69955"/>
        <dbReference type="ChEBI" id="CHEBI:29101"/>
        <dbReference type="ChEBI" id="CHEBI:29108"/>
    </reaction>
</comment>
<comment type="activity regulation">
    <text evidence="10">Calcium transport is stimulated by cytoplasmic Ca(2+) and is inhibited by Na(+). Isoform 1 is more sensitive to stimulation by Ca(2+) than isoform 2. Isoform 2 is more sensitive to inactivation by Na(+).</text>
</comment>
<comment type="subunit">
    <text evidence="10">Interacts with AKAP1.</text>
</comment>
<comment type="subcellular location">
    <subcellularLocation>
        <location evidence="6 9">Cell membrane</location>
        <topology evidence="13">Multi-pass membrane protein</topology>
    </subcellularLocation>
    <subcellularLocation>
        <location evidence="3">Perikaryon</location>
    </subcellularLocation>
    <subcellularLocation>
        <location evidence="3">Cell projection</location>
        <location evidence="3">Dendrite</location>
    </subcellularLocation>
    <subcellularLocation>
        <location evidence="3">Cell projection</location>
        <location evidence="3">Dendritic spine</location>
    </subcellularLocation>
    <subcellularLocation>
        <location evidence="6">Cell membrane</location>
        <location evidence="6">Sarcolemma</location>
    </subcellularLocation>
    <subcellularLocation>
        <location evidence="6">Cytoplasm</location>
        <location evidence="6">Sarcoplasm</location>
    </subcellularLocation>
    <subcellularLocation>
        <location evidence="6">Cell junction</location>
    </subcellularLocation>
    <subcellularLocation>
        <location evidence="9">Mitochondrion outer membrane</location>
        <topology evidence="13">Multi-pass membrane protein</topology>
    </subcellularLocation>
    <subcellularLocation>
        <location evidence="2">Cytoplasm</location>
        <location evidence="2">Perinuclear region</location>
    </subcellularLocation>
    <subcellularLocation>
        <location evidence="9">Endoplasmic reticulum membrane</location>
        <topology evidence="13">Multi-pass membrane protein</topology>
    </subcellularLocation>
    <text evidence="6">Detected at neuromuscular junctions.</text>
</comment>
<comment type="subcellular location">
    <molecule>Isoform 1</molecule>
    <subcellularLocation>
        <location evidence="10">Cell membrane</location>
        <topology evidence="13">Multi-pass membrane protein</topology>
    </subcellularLocation>
</comment>
<comment type="subcellular location">
    <molecule>Isoform 2</molecule>
    <subcellularLocation>
        <location evidence="10">Cell membrane</location>
        <topology evidence="13">Multi-pass membrane protein</topology>
    </subcellularLocation>
</comment>
<comment type="alternative products">
    <event type="alternative splicing"/>
    <isoform>
        <id>S4R2P9-1</id>
        <name>1</name>
        <name evidence="12">NCX3-AC</name>
        <sequence type="displayed"/>
    </isoform>
    <isoform>
        <id>S4R2P9-2</id>
        <name>2</name>
        <name evidence="12">NCX3-B</name>
        <sequence type="described" ref="VSP_057981"/>
    </isoform>
</comment>
<comment type="tissue specificity">
    <text evidence="6 7 8 9 10">Detected in gray and white matter in the spinal cord (PubMed:21959935). Detected in hippocampus neurons (PubMed:21593315). Detected in brain cortex neurons (PubMed:24101730). Detected in skeletal muscle (at protein level) (PubMed:14722618). Isoform 1 and isoform 2 are highly expressed in brain; levels are higher for isoform 2 (PubMed:24616101). Isoform 1 and isoform 2 are detected in soleus muscle; levels are higher for isoform 1 (PubMed:24616101). Detected in gastrocnemius muscle (PubMed:14722618).</text>
</comment>
<comment type="induction">
    <text evidence="9">Down-regulated by hypoxia combined with glucose deprivation (at protein level).</text>
</comment>
<comment type="domain">
    <text evidence="1">The cytoplasmic Calx-beta domains bind the regulatory Ca(2+). The first Calx-beta domain can bind up to four Ca(2+) ions. The second domain can bind another two Ca(2+) ions that are essential for calcium-regulated ion exchange.</text>
</comment>
<comment type="disruption phenotype">
    <text evidence="6 8">Mice appear grossly normal, are viable and fertile, but display muscle fiber necrosis; this affects less than 10% of all fibers. Muscle fibers from flexor digitorum brevis show lack of calcium exchange activity, and very slow return of cytoplasmic Ca(2+) to baseline levels after stimulation with caffeine, a stimulus that triggers release of Ca(2+) stores from the sarcoplasmic reticulum. Mutant mice display decreased endurance and perform poorly on the rota-rod test or when hanging from a taut wire, indicating poor coordination and increased fatigue (PubMed:14722618). Mutant mice display increased cytoplasmic Ca(2+) levels and increased delays in the decrease of cytoplasmic Ca(2+) back to baseline levels after stimulation of hippocampus neurons (PubMed:21593315). They show impaired synaptic transmisison, impaired long-term potentiation, impaired learning and memory (PubMed:21593315). Besides, mutant mice display a decreased size of the spinal cord, decreased myelination, decreased numbers of oligodendrocytes and increased numbers of oligodendrocyte precursor cells (PubMed:21959935).</text>
</comment>
<comment type="similarity">
    <text evidence="13">Belongs to the Ca(2+):cation antiporter (CaCA) (TC 2.A.19) family. SLC8 subfamily.</text>
</comment>
<sequence length="928" mass="102984">MAWLRLQPLTSAFLHFGLVTFVLFLNCLRAEAGDSGDVPSAGQNNESCSGSSDCKEGVILPIWYPENPSLGDKIARVIVYFVALIYMFLGVSIIADRFMASIEVITSQEREVTIKKPNGETSTTTIRVWNETVSNLTLMALGSSAPEILLSLIEVCGHGFIAGDLGPSTIVGSAAFNMFIIIGICVYVIPDGETRKIKHLRVFFVTAAWSIFAYIWLYMILAVFSPGVVQVWEGLLTLFFFPVCVLLAWVADKRLLFYKYMHKKYRTDKHRGIIIETEGDHPKGIEMDGKMMNSHFLDGNFTPLEGKEVDESRREMIRILKDLKQKHPEKDLDQLVEMANYYALSHQQKSRAFYRIQATRMMTGAGNILKKHAAEQAKKTSSMSEVHTDEPEDFASKVFFDPCSYQCLENCGAVLLTVVRKGGDISKTMYVDYKTEDGSANAGADYEFTEGTVVLKPGETQKEFSVGIIDDDIFEEDEHFFVRLSNVRVEEEQLAEGMLPAILNSLPLPRAVLASPCVATVTILDDDHAGIFTFECDTIHVSESIGVMEVKVLRTSGARGTVIVPFRTVEGTAKGGGEDFEDAYGELEFKNDETVKTIHIKVIDDKAYEKNKNYVIEMMGPRMVDMSVQKALLLSPEVTDRKLTVEEEEAKRIAEMGKPVLGEHPKLEVIIEESYEFKSTVDKLIKKTNLALVVGTHSWRDQFMEAITVSAGGDEDEDESGEERLPSCFDYVMHFLTVFWKVLFACVPPTEYCHGWACFVVSILIIGMLTAIIGDLASHFGCTIGLKDSVTAVVFVAFGTSVPDTFASKAAALQDVYADASIGNVTGSNAVNVFLGIGLAWSVAAIYWAMQGQEFHVSAGTLAFSVTLFTIFAFVCLSVLLYRRRPHLGGELGGPRGCKLATTWLFVSLWLLYILFATLEAYCYIKGF</sequence>
<protein>
    <recommendedName>
        <fullName>Sodium/calcium exchanger 3</fullName>
    </recommendedName>
    <alternativeName>
        <fullName>Na(+)/Ca(2+)-exchange protein 3</fullName>
    </alternativeName>
    <alternativeName>
        <fullName>Solute carrier family 8 member 3</fullName>
    </alternativeName>
</protein>
<keyword id="KW-0002">3D-structure</keyword>
<keyword id="KW-0025">Alternative splicing</keyword>
<keyword id="KW-0050">Antiport</keyword>
<keyword id="KW-0106">Calcium</keyword>
<keyword id="KW-0109">Calcium transport</keyword>
<keyword id="KW-0112">Calmodulin-binding</keyword>
<keyword id="KW-0965">Cell junction</keyword>
<keyword id="KW-1003">Cell membrane</keyword>
<keyword id="KW-0966">Cell projection</keyword>
<keyword id="KW-0963">Cytoplasm</keyword>
<keyword id="KW-0256">Endoplasmic reticulum</keyword>
<keyword id="KW-0325">Glycoprotein</keyword>
<keyword id="KW-0406">Ion transport</keyword>
<keyword id="KW-0472">Membrane</keyword>
<keyword id="KW-0479">Metal-binding</keyword>
<keyword id="KW-0496">Mitochondrion</keyword>
<keyword id="KW-1000">Mitochondrion outer membrane</keyword>
<keyword id="KW-1185">Reference proteome</keyword>
<keyword id="KW-0677">Repeat</keyword>
<keyword id="KW-0732">Signal</keyword>
<keyword id="KW-0915">Sodium</keyword>
<keyword id="KW-0739">Sodium transport</keyword>
<keyword id="KW-0770">Synapse</keyword>
<keyword id="KW-0812">Transmembrane</keyword>
<keyword id="KW-1133">Transmembrane helix</keyword>
<keyword id="KW-0813">Transport</keyword>
<accession>S4R2P9</accession>
<accession>Q7TS90</accession>
<accession>Q8VHJ8</accession>
<reference key="1">
    <citation type="submission" date="2001-11" db="EMBL/GenBank/DDBJ databases">
        <title>Towards complete inventory of calcium transporters of the house mouse.</title>
        <authorList>
            <person name="Kraev A."/>
        </authorList>
    </citation>
    <scope>NUCLEOTIDE SEQUENCE [MRNA]</scope>
    <source>
        <strain evidence="17">C57BL/6J</strain>
        <tissue evidence="17">Skeletal muscle</tissue>
    </source>
</reference>
<reference key="2">
    <citation type="journal article" date="2005" name="Science">
        <title>The transcriptional landscape of the mammalian genome.</title>
        <authorList>
            <person name="Carninci P."/>
            <person name="Kasukawa T."/>
            <person name="Katayama S."/>
            <person name="Gough J."/>
            <person name="Frith M.C."/>
            <person name="Maeda N."/>
            <person name="Oyama R."/>
            <person name="Ravasi T."/>
            <person name="Lenhard B."/>
            <person name="Wells C."/>
            <person name="Kodzius R."/>
            <person name="Shimokawa K."/>
            <person name="Bajic V.B."/>
            <person name="Brenner S.E."/>
            <person name="Batalov S."/>
            <person name="Forrest A.R."/>
            <person name="Zavolan M."/>
            <person name="Davis M.J."/>
            <person name="Wilming L.G."/>
            <person name="Aidinis V."/>
            <person name="Allen J.E."/>
            <person name="Ambesi-Impiombato A."/>
            <person name="Apweiler R."/>
            <person name="Aturaliya R.N."/>
            <person name="Bailey T.L."/>
            <person name="Bansal M."/>
            <person name="Baxter L."/>
            <person name="Beisel K.W."/>
            <person name="Bersano T."/>
            <person name="Bono H."/>
            <person name="Chalk A.M."/>
            <person name="Chiu K.P."/>
            <person name="Choudhary V."/>
            <person name="Christoffels A."/>
            <person name="Clutterbuck D.R."/>
            <person name="Crowe M.L."/>
            <person name="Dalla E."/>
            <person name="Dalrymple B.P."/>
            <person name="de Bono B."/>
            <person name="Della Gatta G."/>
            <person name="di Bernardo D."/>
            <person name="Down T."/>
            <person name="Engstrom P."/>
            <person name="Fagiolini M."/>
            <person name="Faulkner G."/>
            <person name="Fletcher C.F."/>
            <person name="Fukushima T."/>
            <person name="Furuno M."/>
            <person name="Futaki S."/>
            <person name="Gariboldi M."/>
            <person name="Georgii-Hemming P."/>
            <person name="Gingeras T.R."/>
            <person name="Gojobori T."/>
            <person name="Green R.E."/>
            <person name="Gustincich S."/>
            <person name="Harbers M."/>
            <person name="Hayashi Y."/>
            <person name="Hensch T.K."/>
            <person name="Hirokawa N."/>
            <person name="Hill D."/>
            <person name="Huminiecki L."/>
            <person name="Iacono M."/>
            <person name="Ikeo K."/>
            <person name="Iwama A."/>
            <person name="Ishikawa T."/>
            <person name="Jakt M."/>
            <person name="Kanapin A."/>
            <person name="Katoh M."/>
            <person name="Kawasawa Y."/>
            <person name="Kelso J."/>
            <person name="Kitamura H."/>
            <person name="Kitano H."/>
            <person name="Kollias G."/>
            <person name="Krishnan S.P."/>
            <person name="Kruger A."/>
            <person name="Kummerfeld S.K."/>
            <person name="Kurochkin I.V."/>
            <person name="Lareau L.F."/>
            <person name="Lazarevic D."/>
            <person name="Lipovich L."/>
            <person name="Liu J."/>
            <person name="Liuni S."/>
            <person name="McWilliam S."/>
            <person name="Madan Babu M."/>
            <person name="Madera M."/>
            <person name="Marchionni L."/>
            <person name="Matsuda H."/>
            <person name="Matsuzawa S."/>
            <person name="Miki H."/>
            <person name="Mignone F."/>
            <person name="Miyake S."/>
            <person name="Morris K."/>
            <person name="Mottagui-Tabar S."/>
            <person name="Mulder N."/>
            <person name="Nakano N."/>
            <person name="Nakauchi H."/>
            <person name="Ng P."/>
            <person name="Nilsson R."/>
            <person name="Nishiguchi S."/>
            <person name="Nishikawa S."/>
            <person name="Nori F."/>
            <person name="Ohara O."/>
            <person name="Okazaki Y."/>
            <person name="Orlando V."/>
            <person name="Pang K.C."/>
            <person name="Pavan W.J."/>
            <person name="Pavesi G."/>
            <person name="Pesole G."/>
            <person name="Petrovsky N."/>
            <person name="Piazza S."/>
            <person name="Reed J."/>
            <person name="Reid J.F."/>
            <person name="Ring B.Z."/>
            <person name="Ringwald M."/>
            <person name="Rost B."/>
            <person name="Ruan Y."/>
            <person name="Salzberg S.L."/>
            <person name="Sandelin A."/>
            <person name="Schneider C."/>
            <person name="Schoenbach C."/>
            <person name="Sekiguchi K."/>
            <person name="Semple C.A."/>
            <person name="Seno S."/>
            <person name="Sessa L."/>
            <person name="Sheng Y."/>
            <person name="Shibata Y."/>
            <person name="Shimada H."/>
            <person name="Shimada K."/>
            <person name="Silva D."/>
            <person name="Sinclair B."/>
            <person name="Sperling S."/>
            <person name="Stupka E."/>
            <person name="Sugiura K."/>
            <person name="Sultana R."/>
            <person name="Takenaka Y."/>
            <person name="Taki K."/>
            <person name="Tammoja K."/>
            <person name="Tan S.L."/>
            <person name="Tang S."/>
            <person name="Taylor M.S."/>
            <person name="Tegner J."/>
            <person name="Teichmann S.A."/>
            <person name="Ueda H.R."/>
            <person name="van Nimwegen E."/>
            <person name="Verardo R."/>
            <person name="Wei C.L."/>
            <person name="Yagi K."/>
            <person name="Yamanishi H."/>
            <person name="Zabarovsky E."/>
            <person name="Zhu S."/>
            <person name="Zimmer A."/>
            <person name="Hide W."/>
            <person name="Bult C."/>
            <person name="Grimmond S.M."/>
            <person name="Teasdale R.D."/>
            <person name="Liu E.T."/>
            <person name="Brusic V."/>
            <person name="Quackenbush J."/>
            <person name="Wahlestedt C."/>
            <person name="Mattick J.S."/>
            <person name="Hume D.A."/>
            <person name="Kai C."/>
            <person name="Sasaki D."/>
            <person name="Tomaru Y."/>
            <person name="Fukuda S."/>
            <person name="Kanamori-Katayama M."/>
            <person name="Suzuki M."/>
            <person name="Aoki J."/>
            <person name="Arakawa T."/>
            <person name="Iida J."/>
            <person name="Imamura K."/>
            <person name="Itoh M."/>
            <person name="Kato T."/>
            <person name="Kawaji H."/>
            <person name="Kawagashira N."/>
            <person name="Kawashima T."/>
            <person name="Kojima M."/>
            <person name="Kondo S."/>
            <person name="Konno H."/>
            <person name="Nakano K."/>
            <person name="Ninomiya N."/>
            <person name="Nishio T."/>
            <person name="Okada M."/>
            <person name="Plessy C."/>
            <person name="Shibata K."/>
            <person name="Shiraki T."/>
            <person name="Suzuki S."/>
            <person name="Tagami M."/>
            <person name="Waki K."/>
            <person name="Watahiki A."/>
            <person name="Okamura-Oho Y."/>
            <person name="Suzuki H."/>
            <person name="Kawai J."/>
            <person name="Hayashizaki Y."/>
        </authorList>
    </citation>
    <scope>NUCLEOTIDE SEQUENCE [LARGE SCALE MRNA] (ISOFORM 2)</scope>
    <source>
        <strain evidence="18">C57BL/6J</strain>
        <tissue evidence="18">Embryo</tissue>
    </source>
</reference>
<reference key="3">
    <citation type="journal article" date="2009" name="PLoS Biol.">
        <title>Lineage-specific biology revealed by a finished genome assembly of the mouse.</title>
        <authorList>
            <person name="Church D.M."/>
            <person name="Goodstadt L."/>
            <person name="Hillier L.W."/>
            <person name="Zody M.C."/>
            <person name="Goldstein S."/>
            <person name="She X."/>
            <person name="Bult C.J."/>
            <person name="Agarwala R."/>
            <person name="Cherry J.L."/>
            <person name="DiCuccio M."/>
            <person name="Hlavina W."/>
            <person name="Kapustin Y."/>
            <person name="Meric P."/>
            <person name="Maglott D."/>
            <person name="Birtle Z."/>
            <person name="Marques A.C."/>
            <person name="Graves T."/>
            <person name="Zhou S."/>
            <person name="Teague B."/>
            <person name="Potamousis K."/>
            <person name="Churas C."/>
            <person name="Place M."/>
            <person name="Herschleb J."/>
            <person name="Runnheim R."/>
            <person name="Forrest D."/>
            <person name="Amos-Landgraf J."/>
            <person name="Schwartz D.C."/>
            <person name="Cheng Z."/>
            <person name="Lindblad-Toh K."/>
            <person name="Eichler E.E."/>
            <person name="Ponting C.P."/>
        </authorList>
    </citation>
    <scope>NUCLEOTIDE SEQUENCE [LARGE SCALE GENOMIC DNA]</scope>
    <source>
        <strain evidence="20">C57BL/6J</strain>
    </source>
</reference>
<reference key="4">
    <citation type="journal article" date="2004" name="Genome Res.">
        <title>The status, quality, and expansion of the NIH full-length cDNA project: the Mammalian Gene Collection (MGC).</title>
        <authorList>
            <consortium name="The MGC Project Team"/>
        </authorList>
    </citation>
    <scope>NUCLEOTIDE SEQUENCE [LARGE SCALE MRNA] (ISOFORM 2)</scope>
    <source>
        <strain evidence="16">C57BL/6J</strain>
        <tissue evidence="16">Brain</tissue>
    </source>
</reference>
<reference key="5">
    <citation type="journal article" date="2004" name="J. Clin. Invest.">
        <title>Impaired neuromuscular transmission and skeletal muscle fiber necrosis in mice lacking Na/Ca exchanger 3.</title>
        <authorList>
            <person name="Sokolow S."/>
            <person name="Manto M."/>
            <person name="Gailly P."/>
            <person name="Molgo J."/>
            <person name="Vandebrouck C."/>
            <person name="Vanderwinden J.M."/>
            <person name="Herchuelz A."/>
            <person name="Schurmans S."/>
        </authorList>
    </citation>
    <scope>DISRUPTION PHENOTYPE</scope>
    <scope>FUNCTION</scope>
    <scope>TRANSPORTER ACTIVITY</scope>
    <scope>SUBCELLULAR LOCATION</scope>
    <scope>TISSUE SPECIFICITY</scope>
</reference>
<reference key="6">
    <citation type="journal article" date="2011" name="J. Neurosci.">
        <title>Na+ -Ca2+ exchanger (NCX3) knock-out mice display an impairment in hippocampal long-term potentiation and spatial learning and memory.</title>
        <authorList>
            <person name="Molinaro P."/>
            <person name="Viggiano D."/>
            <person name="Nistico R."/>
            <person name="Sirabella R."/>
            <person name="Secondo A."/>
            <person name="Boscia F."/>
            <person name="Pannaccione A."/>
            <person name="Scorziello A."/>
            <person name="Mehdawy B."/>
            <person name="Sokolow S."/>
            <person name="Herchuelz A."/>
            <person name="Di Renzo G.F."/>
            <person name="Annunziato L."/>
        </authorList>
    </citation>
    <scope>DISRUPTION PHENOTYPE</scope>
    <scope>FUNCTION</scope>
    <scope>TRANSPORTER ACTIVITY</scope>
    <scope>TISSUE SPECIFICITY</scope>
</reference>
<reference key="7">
    <citation type="journal article" date="2012" name="Cell Death Differ.">
        <title>Silencing or knocking out the Na(+)/Ca(2+) exchanger-3 (NCX3) impairs oligodendrocyte differentiation.</title>
        <authorList>
            <person name="Boscia F."/>
            <person name="D'Avanzo C."/>
            <person name="Pannaccione A."/>
            <person name="Secondo A."/>
            <person name="Casamassa A."/>
            <person name="Formisano L."/>
            <person name="Guida N."/>
            <person name="Sokolow S."/>
            <person name="Herchuelz A."/>
            <person name="Annunziato L."/>
        </authorList>
    </citation>
    <scope>DISRUPTION PHENOTYPE</scope>
    <scope>FUNCTION</scope>
    <scope>TISSUE SPECIFICITY</scope>
</reference>
<reference key="8">
    <citation type="journal article" date="2013" name="J. Cell Sci.">
        <title>NCX3 regulates mitochondrial Ca(2+) handling through the AKAP121-anchored signaling complex and prevents hypoxia-induced neuronal death.</title>
        <authorList>
            <person name="Scorziello A."/>
            <person name="Savoia C."/>
            <person name="Sisalli M.J."/>
            <person name="Adornetto A."/>
            <person name="Secondo A."/>
            <person name="Boscia F."/>
            <person name="Esposito A."/>
            <person name="Polishchuk E.V."/>
            <person name="Polishchuk R.S."/>
            <person name="Molinaro P."/>
            <person name="Carlucci A."/>
            <person name="Lignitto L."/>
            <person name="Di Renzo G."/>
            <person name="Feliciello A."/>
            <person name="Annunziato L."/>
        </authorList>
    </citation>
    <scope>FUNCTION</scope>
    <scope>SUBCELLULAR LOCATION</scope>
    <scope>INTERACTION WITH AKAP1</scope>
    <scope>TISSUE SPECIFICITY</scope>
</reference>
<reference key="9">
    <citation type="journal article" date="2013" name="Mol. Aspects Med.">
        <title>The SLC8 gene family of sodium-calcium exchangers (NCX) - structure, function, and regulation in health and disease.</title>
        <authorList>
            <person name="Khananshvili D."/>
        </authorList>
    </citation>
    <scope>REVIEW</scope>
</reference>
<reference key="10">
    <citation type="journal article" date="2014" name="J. Biol. Chem.">
        <title>Function and regulation of the Na+-Ca2+ exchanger NCX3 splice variants in brain and skeletal muscle.</title>
        <authorList>
            <person name="Michel L.Y."/>
            <person name="Verkaart S."/>
            <person name="Koopman W.J."/>
            <person name="Willems P.H."/>
            <person name="Hoenderop J.G."/>
            <person name="Bindels R.J."/>
        </authorList>
    </citation>
    <scope>FUNCTION (ISOFORMS 1 AND 2)</scope>
    <scope>SUBCELLULAR LOCATION (ISOFORMS 1 AND 2)</scope>
    <scope>TISSUE SPECIFICITY (ISOFORMS 1 AND 2)</scope>
    <scope>ACTIVITY REGULATION (ISOFORMS 1 AND 2)</scope>
</reference>
<reference evidence="21" key="11">
    <citation type="journal article" date="2012" name="J. Biomol. NMR">
        <title>NMR structure note: solution structure of Ca binding domain 2B of the third isoform of the Na/Ca exchanger.</title>
        <authorList>
            <person name="Breukels V."/>
            <person name="Touw W.G."/>
            <person name="Vuister G.W."/>
        </authorList>
    </citation>
    <scope>STRUCTURE BY NMR OF 528-675</scope>
</reference>
<feature type="signal peptide" evidence="4">
    <location>
        <begin position="1"/>
        <end position="30"/>
    </location>
</feature>
<feature type="chain" id="PRO_0000434797" description="Sodium/calcium exchanger 3">
    <location>
        <begin position="31"/>
        <end position="928"/>
    </location>
</feature>
<feature type="topological domain" description="Extracellular" evidence="13">
    <location>
        <begin position="31"/>
        <end position="73"/>
    </location>
</feature>
<feature type="transmembrane region" description="Helical" evidence="4">
    <location>
        <begin position="74"/>
        <end position="94"/>
    </location>
</feature>
<feature type="topological domain" description="Cytoplasmic" evidence="13">
    <location>
        <begin position="95"/>
        <end position="147"/>
    </location>
</feature>
<feature type="transmembrane region" description="Helical" evidence="4">
    <location>
        <begin position="148"/>
        <end position="168"/>
    </location>
</feature>
<feature type="topological domain" description="Extracellular" evidence="13">
    <location>
        <position position="169"/>
    </location>
</feature>
<feature type="transmembrane region" description="Helical" evidence="4">
    <location>
        <begin position="170"/>
        <end position="190"/>
    </location>
</feature>
<feature type="topological domain" description="Cytoplasmic" evidence="13">
    <location>
        <begin position="191"/>
        <end position="201"/>
    </location>
</feature>
<feature type="transmembrane region" description="Helical" evidence="4">
    <location>
        <begin position="202"/>
        <end position="222"/>
    </location>
</feature>
<feature type="topological domain" description="Extracellular" evidence="13">
    <location>
        <begin position="223"/>
        <end position="230"/>
    </location>
</feature>
<feature type="transmembrane region" description="Helical" evidence="4">
    <location>
        <begin position="231"/>
        <end position="251"/>
    </location>
</feature>
<feature type="topological domain" description="Cytoplasmic" evidence="13">
    <location>
        <begin position="252"/>
        <end position="727"/>
    </location>
</feature>
<feature type="transmembrane region" description="Helical" evidence="4">
    <location>
        <begin position="728"/>
        <end position="748"/>
    </location>
</feature>
<feature type="topological domain" description="Extracellular" evidence="13">
    <location>
        <begin position="749"/>
        <end position="755"/>
    </location>
</feature>
<feature type="transmembrane region" description="Helical" evidence="4">
    <location>
        <begin position="756"/>
        <end position="776"/>
    </location>
</feature>
<feature type="topological domain" description="Cytoplasmic" evidence="13">
    <location>
        <begin position="777"/>
        <end position="779"/>
    </location>
</feature>
<feature type="transmembrane region" description="Helical" evidence="4">
    <location>
        <begin position="780"/>
        <end position="800"/>
    </location>
</feature>
<feature type="topological domain" description="Extracellular" evidence="13">
    <location>
        <begin position="801"/>
        <end position="829"/>
    </location>
</feature>
<feature type="transmembrane region" description="Helical" evidence="4">
    <location>
        <begin position="830"/>
        <end position="850"/>
    </location>
</feature>
<feature type="topological domain" description="Cytoplasmic" evidence="13">
    <location>
        <begin position="851"/>
        <end position="861"/>
    </location>
</feature>
<feature type="transmembrane region" description="Helical" evidence="4">
    <location>
        <begin position="862"/>
        <end position="882"/>
    </location>
</feature>
<feature type="topological domain" description="Extracellular" evidence="13">
    <location>
        <begin position="883"/>
        <end position="904"/>
    </location>
</feature>
<feature type="transmembrane region" description="Helical" evidence="4">
    <location>
        <begin position="905"/>
        <end position="925"/>
    </location>
</feature>
<feature type="topological domain" description="Cytoplasmic" evidence="13">
    <location>
        <begin position="926"/>
        <end position="928"/>
    </location>
</feature>
<feature type="domain" description="Calx-beta 1" evidence="4">
    <location>
        <begin position="390"/>
        <end position="485"/>
    </location>
</feature>
<feature type="domain" description="Calx-beta 2" evidence="4">
    <location>
        <begin position="519"/>
        <end position="618"/>
    </location>
</feature>
<feature type="region of interest" description="Putative calmodulin-binding region" evidence="1">
    <location>
        <begin position="253"/>
        <end position="272"/>
    </location>
</feature>
<feature type="binding site" evidence="1">
    <location>
        <position position="409"/>
    </location>
    <ligand>
        <name>Ca(2+)</name>
        <dbReference type="ChEBI" id="CHEBI:29108"/>
        <label>1</label>
    </ligand>
</feature>
<feature type="binding site" evidence="1">
    <location>
        <position position="409"/>
    </location>
    <ligand>
        <name>Ca(2+)</name>
        <dbReference type="ChEBI" id="CHEBI:29108"/>
        <label>2</label>
    </ligand>
</feature>
<feature type="binding site" evidence="1">
    <location>
        <position position="409"/>
    </location>
    <ligand>
        <name>Ca(2+)</name>
        <dbReference type="ChEBI" id="CHEBI:29108"/>
        <label>3</label>
    </ligand>
</feature>
<feature type="binding site" evidence="1">
    <location>
        <position position="445"/>
    </location>
    <ligand>
        <name>Ca(2+)</name>
        <dbReference type="ChEBI" id="CHEBI:29108"/>
        <label>1</label>
    </ligand>
</feature>
<feature type="binding site" evidence="1">
    <location>
        <position position="445"/>
    </location>
    <ligand>
        <name>Ca(2+)</name>
        <dbReference type="ChEBI" id="CHEBI:29108"/>
        <label>4</label>
    </ligand>
</feature>
<feature type="binding site" evidence="1">
    <location>
        <position position="470"/>
    </location>
    <ligand>
        <name>Ca(2+)</name>
        <dbReference type="ChEBI" id="CHEBI:29108"/>
        <label>2</label>
    </ligand>
</feature>
<feature type="binding site" evidence="1">
    <location>
        <position position="471"/>
    </location>
    <ligand>
        <name>Ca(2+)</name>
        <dbReference type="ChEBI" id="CHEBI:29108"/>
        <label>1</label>
    </ligand>
</feature>
<feature type="binding site" evidence="1">
    <location>
        <position position="471"/>
    </location>
    <ligand>
        <name>Ca(2+)</name>
        <dbReference type="ChEBI" id="CHEBI:29108"/>
        <label>2</label>
    </ligand>
</feature>
<feature type="binding site" evidence="1">
    <location>
        <position position="471"/>
    </location>
    <ligand>
        <name>Ca(2+)</name>
        <dbReference type="ChEBI" id="CHEBI:29108"/>
        <label>3</label>
    </ligand>
</feature>
<feature type="binding site" evidence="1">
    <location>
        <position position="471"/>
    </location>
    <ligand>
        <name>Ca(2+)</name>
        <dbReference type="ChEBI" id="CHEBI:29108"/>
        <label>4</label>
    </ligand>
</feature>
<feature type="binding site" evidence="1">
    <location>
        <position position="473"/>
    </location>
    <ligand>
        <name>Ca(2+)</name>
        <dbReference type="ChEBI" id="CHEBI:29108"/>
        <label>3</label>
    </ligand>
</feature>
<feature type="binding site" evidence="1">
    <location>
        <position position="475"/>
    </location>
    <ligand>
        <name>Ca(2+)</name>
        <dbReference type="ChEBI" id="CHEBI:29108"/>
        <label>1</label>
    </ligand>
</feature>
<feature type="binding site" evidence="1">
    <location>
        <position position="475"/>
    </location>
    <ligand>
        <name>Ca(2+)</name>
        <dbReference type="ChEBI" id="CHEBI:29108"/>
        <label>3</label>
    </ligand>
</feature>
<feature type="binding site" evidence="1">
    <location>
        <position position="475"/>
    </location>
    <ligand>
        <name>Ca(2+)</name>
        <dbReference type="ChEBI" id="CHEBI:29108"/>
        <label>4</label>
    </ligand>
</feature>
<feature type="binding site" evidence="1">
    <location>
        <position position="478"/>
    </location>
    <ligand>
        <name>Ca(2+)</name>
        <dbReference type="ChEBI" id="CHEBI:29108"/>
        <label>4</label>
    </ligand>
</feature>
<feature type="binding site" evidence="1">
    <location>
        <position position="525"/>
    </location>
    <ligand>
        <name>Ca(2+)</name>
        <dbReference type="ChEBI" id="CHEBI:29108"/>
        <label>3</label>
    </ligand>
</feature>
<feature type="binding site" evidence="1">
    <location>
        <position position="526"/>
    </location>
    <ligand>
        <name>Ca(2+)</name>
        <dbReference type="ChEBI" id="CHEBI:29108"/>
        <label>2</label>
    </ligand>
</feature>
<feature type="binding site" evidence="1">
    <location>
        <position position="527"/>
    </location>
    <ligand>
        <name>Ca(2+)</name>
        <dbReference type="ChEBI" id="CHEBI:29108"/>
        <label>2</label>
    </ligand>
</feature>
<feature type="binding site" evidence="1">
    <location>
        <position position="527"/>
    </location>
    <ligand>
        <name>Ca(2+)</name>
        <dbReference type="ChEBI" id="CHEBI:29108"/>
        <label>3</label>
    </ligand>
</feature>
<feature type="binding site" evidence="1">
    <location>
        <position position="543"/>
    </location>
    <ligand>
        <name>Ca(2+)</name>
        <dbReference type="ChEBI" id="CHEBI:29108"/>
        <label>5</label>
    </ligand>
</feature>
<feature type="binding site" evidence="1">
    <location>
        <position position="579"/>
    </location>
    <ligand>
        <name>Ca(2+)</name>
        <dbReference type="ChEBI" id="CHEBI:29108"/>
        <label>6</label>
    </ligand>
</feature>
<feature type="binding site" evidence="1">
    <location>
        <position position="605"/>
    </location>
    <ligand>
        <name>Ca(2+)</name>
        <dbReference type="ChEBI" id="CHEBI:29108"/>
        <label>5</label>
    </ligand>
</feature>
<feature type="binding site" evidence="1">
    <location>
        <position position="605"/>
    </location>
    <ligand>
        <name>Ca(2+)</name>
        <dbReference type="ChEBI" id="CHEBI:29108"/>
        <label>6</label>
    </ligand>
</feature>
<feature type="binding site" evidence="1">
    <location>
        <position position="673"/>
    </location>
    <ligand>
        <name>Ca(2+)</name>
        <dbReference type="ChEBI" id="CHEBI:29108"/>
        <label>5</label>
    </ligand>
</feature>
<feature type="glycosylation site" description="N-linked (GlcNAc...) asparagine" evidence="5">
    <location>
        <position position="45"/>
    </location>
</feature>
<feature type="glycosylation site" description="N-linked (GlcNAc...) asparagine" evidence="5">
    <location>
        <position position="824"/>
    </location>
</feature>
<feature type="splice variant" id="VSP_057981" description="In isoform 2." evidence="13">
    <original>HIKVIDDKAYEKNKNYVIEMMGPRMVDMSVQKALLLSP</original>
    <variation>RVKIVDEEEYERQENFFIALGEPKWMERGIS</variation>
    <location>
        <begin position="599"/>
        <end position="636"/>
    </location>
</feature>
<feature type="sequence conflict" description="In Ref. 1; AAL39160." evidence="13" ref="1">
    <original>H</original>
    <variation>P</variation>
    <location>
        <position position="754"/>
    </location>
</feature>
<feature type="strand" evidence="22">
    <location>
        <begin position="532"/>
        <end position="535"/>
    </location>
</feature>
<feature type="strand" evidence="22">
    <location>
        <begin position="537"/>
        <end position="541"/>
    </location>
</feature>
<feature type="helix" evidence="22">
    <location>
        <begin position="543"/>
        <end position="545"/>
    </location>
</feature>
<feature type="strand" evidence="22">
    <location>
        <begin position="546"/>
        <end position="554"/>
    </location>
</feature>
<feature type="strand" evidence="22">
    <location>
        <begin position="562"/>
        <end position="573"/>
    </location>
</feature>
<feature type="strand" evidence="22">
    <location>
        <begin position="578"/>
        <end position="580"/>
    </location>
</feature>
<feature type="strand" evidence="22">
    <location>
        <begin position="585"/>
        <end position="589"/>
    </location>
</feature>
<feature type="strand" evidence="22">
    <location>
        <begin position="595"/>
        <end position="602"/>
    </location>
</feature>
<feature type="strand" evidence="22">
    <location>
        <begin position="612"/>
        <end position="618"/>
    </location>
</feature>
<feature type="turn" evidence="22">
    <location>
        <begin position="624"/>
        <end position="626"/>
    </location>
</feature>
<feature type="helix" evidence="22">
    <location>
        <begin position="645"/>
        <end position="656"/>
    </location>
</feature>
<feature type="strand" evidence="22">
    <location>
        <begin position="666"/>
        <end position="674"/>
    </location>
</feature>
<name>NAC3_MOUSE</name>
<gene>
    <name evidence="19" type="primary">Slc8a3</name>
    <name evidence="11 12" type="synonym">Ncx3</name>
</gene>
<evidence type="ECO:0000250" key="1">
    <source>
        <dbReference type="UniProtKB" id="P23685"/>
    </source>
</evidence>
<evidence type="ECO:0000250" key="2">
    <source>
        <dbReference type="UniProtKB" id="P57103"/>
    </source>
</evidence>
<evidence type="ECO:0000250" key="3">
    <source>
        <dbReference type="UniProtKB" id="P70549"/>
    </source>
</evidence>
<evidence type="ECO:0000255" key="4"/>
<evidence type="ECO:0000255" key="5">
    <source>
        <dbReference type="PROSITE-ProRule" id="PRU00498"/>
    </source>
</evidence>
<evidence type="ECO:0000269" key="6">
    <source>
    </source>
</evidence>
<evidence type="ECO:0000269" key="7">
    <source>
    </source>
</evidence>
<evidence type="ECO:0000269" key="8">
    <source>
    </source>
</evidence>
<evidence type="ECO:0000269" key="9">
    <source>
    </source>
</evidence>
<evidence type="ECO:0000269" key="10">
    <source>
    </source>
</evidence>
<evidence type="ECO:0000303" key="11">
    <source>
    </source>
</evidence>
<evidence type="ECO:0000303" key="12">
    <source>
    </source>
</evidence>
<evidence type="ECO:0000305" key="13"/>
<evidence type="ECO:0000305" key="14">
    <source>
    </source>
</evidence>
<evidence type="ECO:0000305" key="15">
    <source>
    </source>
</evidence>
<evidence type="ECO:0000312" key="16">
    <source>
        <dbReference type="EMBL" id="AAH52435.1"/>
    </source>
</evidence>
<evidence type="ECO:0000312" key="17">
    <source>
        <dbReference type="EMBL" id="AAL39160.1"/>
    </source>
</evidence>
<evidence type="ECO:0000312" key="18">
    <source>
        <dbReference type="EMBL" id="BAE38073.1"/>
    </source>
</evidence>
<evidence type="ECO:0000312" key="19">
    <source>
        <dbReference type="MGI" id="MGI:107976"/>
    </source>
</evidence>
<evidence type="ECO:0000312" key="20">
    <source>
        <dbReference type="Proteomes" id="UP000000589"/>
    </source>
</evidence>
<evidence type="ECO:0007744" key="21">
    <source>
        <dbReference type="PDB" id="2LT9"/>
    </source>
</evidence>
<evidence type="ECO:0007829" key="22">
    <source>
        <dbReference type="PDB" id="2LT9"/>
    </source>
</evidence>
<dbReference type="EMBL" id="AF453257">
    <property type="protein sequence ID" value="AAL39160.1"/>
    <property type="molecule type" value="mRNA"/>
</dbReference>
<dbReference type="EMBL" id="AK165197">
    <property type="protein sequence ID" value="BAE38073.1"/>
    <property type="molecule type" value="mRNA"/>
</dbReference>
<dbReference type="EMBL" id="AC124384">
    <property type="status" value="NOT_ANNOTATED_CDS"/>
    <property type="molecule type" value="Genomic_DNA"/>
</dbReference>
<dbReference type="EMBL" id="BC052435">
    <property type="protein sequence ID" value="AAH52435.1"/>
    <property type="molecule type" value="mRNA"/>
</dbReference>
<dbReference type="EMBL" id="BC080862">
    <property type="protein sequence ID" value="AAH80862.1"/>
    <property type="molecule type" value="mRNA"/>
</dbReference>
<dbReference type="CCDS" id="CCDS36485.1">
    <molecule id="S4R2P9-1"/>
</dbReference>
<dbReference type="CCDS" id="CCDS49103.1">
    <molecule id="S4R2P9-2"/>
</dbReference>
<dbReference type="RefSeq" id="NP_001161392.1">
    <molecule id="S4R2P9-2"/>
    <property type="nucleotide sequence ID" value="NM_001167920.1"/>
</dbReference>
<dbReference type="RefSeq" id="NP_001409583.1">
    <molecule id="S4R2P9-2"/>
    <property type="nucleotide sequence ID" value="NM_001422654.1"/>
</dbReference>
<dbReference type="RefSeq" id="NP_536688.2">
    <molecule id="S4R2P9-1"/>
    <property type="nucleotide sequence ID" value="NM_080440.3"/>
</dbReference>
<dbReference type="RefSeq" id="XP_036013058.1">
    <molecule id="S4R2P9-1"/>
    <property type="nucleotide sequence ID" value="XM_036157165.1"/>
</dbReference>
<dbReference type="PDB" id="2LT9">
    <property type="method" value="NMR"/>
    <property type="chains" value="A=528-682"/>
</dbReference>
<dbReference type="PDBsum" id="2LT9"/>
<dbReference type="SMR" id="S4R2P9"/>
<dbReference type="FunCoup" id="S4R2P9">
    <property type="interactions" value="2028"/>
</dbReference>
<dbReference type="STRING" id="10090.ENSMUSP00000138735"/>
<dbReference type="GlyCosmos" id="S4R2P9">
    <property type="glycosylation" value="2 sites, No reported glycans"/>
</dbReference>
<dbReference type="GlyGen" id="S4R2P9">
    <property type="glycosylation" value="2 sites"/>
</dbReference>
<dbReference type="iPTMnet" id="S4R2P9"/>
<dbReference type="PhosphoSitePlus" id="S4R2P9"/>
<dbReference type="PaxDb" id="10090-ENSMUSP00000138735"/>
<dbReference type="ProteomicsDB" id="286143">
    <molecule id="S4R2P9-1"/>
</dbReference>
<dbReference type="ProteomicsDB" id="286144">
    <molecule id="S4R2P9-2"/>
</dbReference>
<dbReference type="Antibodypedia" id="12397">
    <property type="antibodies" value="150 antibodies from 24 providers"/>
</dbReference>
<dbReference type="DNASU" id="110893"/>
<dbReference type="Ensembl" id="ENSMUST00000085238.13">
    <molecule id="S4R2P9-2"/>
    <property type="protein sequence ID" value="ENSMUSP00000082334.6"/>
    <property type="gene ID" value="ENSMUSG00000079055.11"/>
</dbReference>
<dbReference type="Ensembl" id="ENSMUST00000182208.8">
    <molecule id="S4R2P9-1"/>
    <property type="protein sequence ID" value="ENSMUSP00000138735.2"/>
    <property type="gene ID" value="ENSMUSG00000079055.11"/>
</dbReference>
<dbReference type="GeneID" id="110893"/>
<dbReference type="KEGG" id="mmu:110893"/>
<dbReference type="UCSC" id="uc007obv.2">
    <molecule id="S4R2P9-1"/>
    <property type="organism name" value="mouse"/>
</dbReference>
<dbReference type="UCSC" id="uc007obw.2">
    <property type="organism name" value="mouse"/>
</dbReference>
<dbReference type="AGR" id="MGI:107976"/>
<dbReference type="CTD" id="6547"/>
<dbReference type="MGI" id="MGI:107976">
    <property type="gene designation" value="Slc8a3"/>
</dbReference>
<dbReference type="VEuPathDB" id="HostDB:ENSMUSG00000079055"/>
<dbReference type="eggNOG" id="KOG1306">
    <property type="taxonomic scope" value="Eukaryota"/>
</dbReference>
<dbReference type="GeneTree" id="ENSGT00940000157547"/>
<dbReference type="InParanoid" id="S4R2P9"/>
<dbReference type="OMA" id="VEMANYH"/>
<dbReference type="OrthoDB" id="418484at2759"/>
<dbReference type="PhylomeDB" id="S4R2P9"/>
<dbReference type="Reactome" id="R-MMU-418359">
    <property type="pathway name" value="Reduction of cytosolic Ca++ levels"/>
</dbReference>
<dbReference type="Reactome" id="R-MMU-425561">
    <property type="pathway name" value="Sodium/Calcium exchangers"/>
</dbReference>
<dbReference type="Reactome" id="R-MMU-5578775">
    <property type="pathway name" value="Ion homeostasis"/>
</dbReference>
<dbReference type="BioGRID-ORCS" id="110893">
    <property type="hits" value="3 hits in 76 CRISPR screens"/>
</dbReference>
<dbReference type="ChiTaRS" id="Slc8a3">
    <property type="organism name" value="mouse"/>
</dbReference>
<dbReference type="EvolutionaryTrace" id="S4R2P9"/>
<dbReference type="PRO" id="PR:S4R2P9"/>
<dbReference type="Proteomes" id="UP000000589">
    <property type="component" value="Chromosome 12"/>
</dbReference>
<dbReference type="RNAct" id="S4R2P9">
    <property type="molecule type" value="protein"/>
</dbReference>
<dbReference type="Bgee" id="ENSMUSG00000079055">
    <property type="expression patterns" value="Expressed in bone fossa and 166 other cell types or tissues"/>
</dbReference>
<dbReference type="ExpressionAtlas" id="S4R2P9">
    <property type="expression patterns" value="baseline and differential"/>
</dbReference>
<dbReference type="GO" id="GO:0070161">
    <property type="term" value="C:anchoring junction"/>
    <property type="evidence" value="ECO:0007669"/>
    <property type="project" value="UniProtKB-SubCell"/>
</dbReference>
<dbReference type="GO" id="GO:0043679">
    <property type="term" value="C:axon terminus"/>
    <property type="evidence" value="ECO:0000315"/>
    <property type="project" value="ARUK-UCL"/>
</dbReference>
<dbReference type="GO" id="GO:0005813">
    <property type="term" value="C:centrosome"/>
    <property type="evidence" value="ECO:0007669"/>
    <property type="project" value="Ensembl"/>
</dbReference>
<dbReference type="GO" id="GO:0005829">
    <property type="term" value="C:cytosol"/>
    <property type="evidence" value="ECO:0007669"/>
    <property type="project" value="Ensembl"/>
</dbReference>
<dbReference type="GO" id="GO:0043197">
    <property type="term" value="C:dendritic spine"/>
    <property type="evidence" value="ECO:0007669"/>
    <property type="project" value="UniProtKB-SubCell"/>
</dbReference>
<dbReference type="GO" id="GO:0005789">
    <property type="term" value="C:endoplasmic reticulum membrane"/>
    <property type="evidence" value="ECO:0000314"/>
    <property type="project" value="UniProtKB"/>
</dbReference>
<dbReference type="GO" id="GO:0005874">
    <property type="term" value="C:microtubule"/>
    <property type="evidence" value="ECO:0007669"/>
    <property type="project" value="Ensembl"/>
</dbReference>
<dbReference type="GO" id="GO:0005741">
    <property type="term" value="C:mitochondrial outer membrane"/>
    <property type="evidence" value="ECO:0000314"/>
    <property type="project" value="UniProtKB"/>
</dbReference>
<dbReference type="GO" id="GO:0031594">
    <property type="term" value="C:neuromuscular junction"/>
    <property type="evidence" value="ECO:0000314"/>
    <property type="project" value="UniProtKB"/>
</dbReference>
<dbReference type="GO" id="GO:0005654">
    <property type="term" value="C:nucleoplasm"/>
    <property type="evidence" value="ECO:0007669"/>
    <property type="project" value="Ensembl"/>
</dbReference>
<dbReference type="GO" id="GO:0043204">
    <property type="term" value="C:perikaryon"/>
    <property type="evidence" value="ECO:0007669"/>
    <property type="project" value="UniProtKB-SubCell"/>
</dbReference>
<dbReference type="GO" id="GO:0048471">
    <property type="term" value="C:perinuclear region of cytoplasm"/>
    <property type="evidence" value="ECO:0007669"/>
    <property type="project" value="UniProtKB-SubCell"/>
</dbReference>
<dbReference type="GO" id="GO:0005886">
    <property type="term" value="C:plasma membrane"/>
    <property type="evidence" value="ECO:0000314"/>
    <property type="project" value="UniProtKB"/>
</dbReference>
<dbReference type="GO" id="GO:0014069">
    <property type="term" value="C:postsynaptic density"/>
    <property type="evidence" value="ECO:0000315"/>
    <property type="project" value="ARUK-UCL"/>
</dbReference>
<dbReference type="GO" id="GO:0045211">
    <property type="term" value="C:postsynaptic membrane"/>
    <property type="evidence" value="ECO:0007669"/>
    <property type="project" value="Ensembl"/>
</dbReference>
<dbReference type="GO" id="GO:0042383">
    <property type="term" value="C:sarcolemma"/>
    <property type="evidence" value="ECO:0000314"/>
    <property type="project" value="UniProtKB"/>
</dbReference>
<dbReference type="GO" id="GO:0016528">
    <property type="term" value="C:sarcoplasm"/>
    <property type="evidence" value="ECO:0007669"/>
    <property type="project" value="UniProtKB-SubCell"/>
</dbReference>
<dbReference type="GO" id="GO:0045202">
    <property type="term" value="C:synapse"/>
    <property type="evidence" value="ECO:0000314"/>
    <property type="project" value="ARUK-UCL"/>
</dbReference>
<dbReference type="GO" id="GO:0015368">
    <property type="term" value="F:calcium:monoatomic cation antiporter activity"/>
    <property type="evidence" value="ECO:0000314"/>
    <property type="project" value="MGI"/>
</dbReference>
<dbReference type="GO" id="GO:1905060">
    <property type="term" value="F:calcium:monoatomic cation antiporter activity involved in regulation of postsynaptic cytosolic calcium ion concentration"/>
    <property type="evidence" value="ECO:0007669"/>
    <property type="project" value="Ensembl"/>
</dbReference>
<dbReference type="GO" id="GO:0005432">
    <property type="term" value="F:calcium:sodium antiporter activity"/>
    <property type="evidence" value="ECO:0000315"/>
    <property type="project" value="UniProtKB"/>
</dbReference>
<dbReference type="GO" id="GO:0005516">
    <property type="term" value="F:calmodulin binding"/>
    <property type="evidence" value="ECO:0007669"/>
    <property type="project" value="UniProtKB-KW"/>
</dbReference>
<dbReference type="GO" id="GO:0046872">
    <property type="term" value="F:metal ion binding"/>
    <property type="evidence" value="ECO:0007669"/>
    <property type="project" value="UniProtKB-KW"/>
</dbReference>
<dbReference type="GO" id="GO:1990034">
    <property type="term" value="P:calcium ion export across plasma membrane"/>
    <property type="evidence" value="ECO:0007669"/>
    <property type="project" value="Ensembl"/>
</dbReference>
<dbReference type="GO" id="GO:0098703">
    <property type="term" value="P:calcium ion import across plasma membrane"/>
    <property type="evidence" value="ECO:0007669"/>
    <property type="project" value="Ensembl"/>
</dbReference>
<dbReference type="GO" id="GO:0070588">
    <property type="term" value="P:calcium ion transmembrane transport"/>
    <property type="evidence" value="ECO:0000315"/>
    <property type="project" value="UniProtKB"/>
</dbReference>
<dbReference type="GO" id="GO:0060402">
    <property type="term" value="P:calcium ion transport into cytosol"/>
    <property type="evidence" value="ECO:0007669"/>
    <property type="project" value="Ensembl"/>
</dbReference>
<dbReference type="GO" id="GO:0007154">
    <property type="term" value="P:cell communication"/>
    <property type="evidence" value="ECO:0007669"/>
    <property type="project" value="InterPro"/>
</dbReference>
<dbReference type="GO" id="GO:0071320">
    <property type="term" value="P:cellular response to cAMP"/>
    <property type="evidence" value="ECO:0007669"/>
    <property type="project" value="Ensembl"/>
</dbReference>
<dbReference type="GO" id="GO:0071456">
    <property type="term" value="P:cellular response to hypoxia"/>
    <property type="evidence" value="ECO:0000314"/>
    <property type="project" value="UniProtKB"/>
</dbReference>
<dbReference type="GO" id="GO:0002244">
    <property type="term" value="P:hematopoietic progenitor cell differentiation"/>
    <property type="evidence" value="ECO:0000315"/>
    <property type="project" value="MGI"/>
</dbReference>
<dbReference type="GO" id="GO:0006874">
    <property type="term" value="P:intracellular calcium ion homeostasis"/>
    <property type="evidence" value="ECO:0000315"/>
    <property type="project" value="UniProtKB"/>
</dbReference>
<dbReference type="GO" id="GO:0007612">
    <property type="term" value="P:learning"/>
    <property type="evidence" value="ECO:0000315"/>
    <property type="project" value="UniProtKB"/>
</dbReference>
<dbReference type="GO" id="GO:0007611">
    <property type="term" value="P:learning or memory"/>
    <property type="evidence" value="ECO:0000315"/>
    <property type="project" value="ARUK-UCL"/>
</dbReference>
<dbReference type="GO" id="GO:0060291">
    <property type="term" value="P:long-term synaptic potentiation"/>
    <property type="evidence" value="ECO:0000315"/>
    <property type="project" value="UniProtKB"/>
</dbReference>
<dbReference type="GO" id="GO:0007613">
    <property type="term" value="P:memory"/>
    <property type="evidence" value="ECO:0000315"/>
    <property type="project" value="UniProtKB"/>
</dbReference>
<dbReference type="GO" id="GO:0030001">
    <property type="term" value="P:metal ion transport"/>
    <property type="evidence" value="ECO:0000314"/>
    <property type="project" value="MGI"/>
</dbReference>
<dbReference type="GO" id="GO:0051560">
    <property type="term" value="P:mitochondrial calcium ion homeostasis"/>
    <property type="evidence" value="ECO:0000315"/>
    <property type="project" value="UniProtKB"/>
</dbReference>
<dbReference type="GO" id="GO:0006851">
    <property type="term" value="P:mitochondrial calcium ion transmembrane transport"/>
    <property type="evidence" value="ECO:0000315"/>
    <property type="project" value="UniProtKB"/>
</dbReference>
<dbReference type="GO" id="GO:0098815">
    <property type="term" value="P:modulation of excitatory postsynaptic potential"/>
    <property type="evidence" value="ECO:0000315"/>
    <property type="project" value="ARUK-UCL"/>
</dbReference>
<dbReference type="GO" id="GO:0042552">
    <property type="term" value="P:myelination"/>
    <property type="evidence" value="ECO:0000315"/>
    <property type="project" value="UniProtKB"/>
</dbReference>
<dbReference type="GO" id="GO:1902532">
    <property type="term" value="P:negative regulation of intracellular signal transduction"/>
    <property type="evidence" value="ECO:0000315"/>
    <property type="project" value="ARUK-UCL"/>
</dbReference>
<dbReference type="GO" id="GO:0048709">
    <property type="term" value="P:oligodendrocyte differentiation"/>
    <property type="evidence" value="ECO:0000315"/>
    <property type="project" value="UniProtKB"/>
</dbReference>
<dbReference type="GO" id="GO:0014819">
    <property type="term" value="P:regulation of skeletal muscle contraction"/>
    <property type="evidence" value="ECO:0000315"/>
    <property type="project" value="UniProtKB"/>
</dbReference>
<dbReference type="GO" id="GO:0035725">
    <property type="term" value="P:sodium ion transmembrane transport"/>
    <property type="evidence" value="ECO:0000315"/>
    <property type="project" value="UniProtKB"/>
</dbReference>
<dbReference type="GO" id="GO:0050808">
    <property type="term" value="P:synapse organization"/>
    <property type="evidence" value="ECO:0000315"/>
    <property type="project" value="ARUK-UCL"/>
</dbReference>
<dbReference type="GO" id="GO:0021537">
    <property type="term" value="P:telencephalon development"/>
    <property type="evidence" value="ECO:0007669"/>
    <property type="project" value="Ensembl"/>
</dbReference>
<dbReference type="FunFam" id="1.20.1420.30:FF:000001">
    <property type="entry name" value="sodium/calcium exchanger 1 isoform X1"/>
    <property type="match status" value="1"/>
</dbReference>
<dbReference type="FunFam" id="1.20.1420.30:FF:000003">
    <property type="entry name" value="sodium/calcium exchanger 1 isoform X1"/>
    <property type="match status" value="1"/>
</dbReference>
<dbReference type="FunFam" id="2.60.40.2030:FF:000001">
    <property type="entry name" value="sodium/calcium exchanger 1 isoform X1"/>
    <property type="match status" value="1"/>
</dbReference>
<dbReference type="FunFam" id="2.60.40.2030:FF:000002">
    <property type="entry name" value="sodium/calcium exchanger 3 isoform X1"/>
    <property type="match status" value="1"/>
</dbReference>
<dbReference type="Gene3D" id="2.60.40.2030">
    <property type="match status" value="2"/>
</dbReference>
<dbReference type="Gene3D" id="1.20.1420.30">
    <property type="entry name" value="NCX, central ion-binding region"/>
    <property type="match status" value="2"/>
</dbReference>
<dbReference type="InterPro" id="IPR051171">
    <property type="entry name" value="CaCA"/>
</dbReference>
<dbReference type="InterPro" id="IPR038081">
    <property type="entry name" value="CalX-like_sf"/>
</dbReference>
<dbReference type="InterPro" id="IPR003644">
    <property type="entry name" value="Calx_beta"/>
</dbReference>
<dbReference type="InterPro" id="IPR004836">
    <property type="entry name" value="Na_Ca_Ex"/>
</dbReference>
<dbReference type="InterPro" id="IPR032452">
    <property type="entry name" value="Na_Ca_Ex_C-exten"/>
</dbReference>
<dbReference type="InterPro" id="IPR004837">
    <property type="entry name" value="NaCa_Exmemb"/>
</dbReference>
<dbReference type="InterPro" id="IPR044880">
    <property type="entry name" value="NCX_ion-bd_dom_sf"/>
</dbReference>
<dbReference type="NCBIfam" id="TIGR00845">
    <property type="entry name" value="caca"/>
    <property type="match status" value="1"/>
</dbReference>
<dbReference type="PANTHER" id="PTHR11878">
    <property type="entry name" value="SODIUM/CALCIUM EXCHANGER"/>
    <property type="match status" value="1"/>
</dbReference>
<dbReference type="PANTHER" id="PTHR11878:SF7">
    <property type="entry name" value="SODIUM_CALCIUM EXCHANGER 3"/>
    <property type="match status" value="1"/>
</dbReference>
<dbReference type="Pfam" id="PF03160">
    <property type="entry name" value="Calx-beta"/>
    <property type="match status" value="1"/>
</dbReference>
<dbReference type="Pfam" id="PF01699">
    <property type="entry name" value="Na_Ca_ex"/>
    <property type="match status" value="2"/>
</dbReference>
<dbReference type="Pfam" id="PF16494">
    <property type="entry name" value="Na_Ca_ex_C"/>
    <property type="match status" value="1"/>
</dbReference>
<dbReference type="PRINTS" id="PR01259">
    <property type="entry name" value="NACAEXCHNGR"/>
</dbReference>
<dbReference type="SMART" id="SM00237">
    <property type="entry name" value="Calx_beta"/>
    <property type="match status" value="2"/>
</dbReference>
<dbReference type="SUPFAM" id="SSF141072">
    <property type="entry name" value="CalX-like"/>
    <property type="match status" value="2"/>
</dbReference>
<proteinExistence type="evidence at protein level"/>
<organism>
    <name type="scientific">Mus musculus</name>
    <name type="common">Mouse</name>
    <dbReference type="NCBI Taxonomy" id="10090"/>
    <lineage>
        <taxon>Eukaryota</taxon>
        <taxon>Metazoa</taxon>
        <taxon>Chordata</taxon>
        <taxon>Craniata</taxon>
        <taxon>Vertebrata</taxon>
        <taxon>Euteleostomi</taxon>
        <taxon>Mammalia</taxon>
        <taxon>Eutheria</taxon>
        <taxon>Euarchontoglires</taxon>
        <taxon>Glires</taxon>
        <taxon>Rodentia</taxon>
        <taxon>Myomorpha</taxon>
        <taxon>Muroidea</taxon>
        <taxon>Muridae</taxon>
        <taxon>Murinae</taxon>
        <taxon>Mus</taxon>
        <taxon>Mus</taxon>
    </lineage>
</organism>